<gene>
    <name type="primary">yczH</name>
    <name type="ordered locus">BSU04020</name>
</gene>
<reference key="1">
    <citation type="journal article" date="1997" name="Nature">
        <title>The complete genome sequence of the Gram-positive bacterium Bacillus subtilis.</title>
        <authorList>
            <person name="Kunst F."/>
            <person name="Ogasawara N."/>
            <person name="Moszer I."/>
            <person name="Albertini A.M."/>
            <person name="Alloni G."/>
            <person name="Azevedo V."/>
            <person name="Bertero M.G."/>
            <person name="Bessieres P."/>
            <person name="Bolotin A."/>
            <person name="Borchert S."/>
            <person name="Borriss R."/>
            <person name="Boursier L."/>
            <person name="Brans A."/>
            <person name="Braun M."/>
            <person name="Brignell S.C."/>
            <person name="Bron S."/>
            <person name="Brouillet S."/>
            <person name="Bruschi C.V."/>
            <person name="Caldwell B."/>
            <person name="Capuano V."/>
            <person name="Carter N.M."/>
            <person name="Choi S.-K."/>
            <person name="Codani J.-J."/>
            <person name="Connerton I.F."/>
            <person name="Cummings N.J."/>
            <person name="Daniel R.A."/>
            <person name="Denizot F."/>
            <person name="Devine K.M."/>
            <person name="Duesterhoeft A."/>
            <person name="Ehrlich S.D."/>
            <person name="Emmerson P.T."/>
            <person name="Entian K.-D."/>
            <person name="Errington J."/>
            <person name="Fabret C."/>
            <person name="Ferrari E."/>
            <person name="Foulger D."/>
            <person name="Fritz C."/>
            <person name="Fujita M."/>
            <person name="Fujita Y."/>
            <person name="Fuma S."/>
            <person name="Galizzi A."/>
            <person name="Galleron N."/>
            <person name="Ghim S.-Y."/>
            <person name="Glaser P."/>
            <person name="Goffeau A."/>
            <person name="Golightly E.J."/>
            <person name="Grandi G."/>
            <person name="Guiseppi G."/>
            <person name="Guy B.J."/>
            <person name="Haga K."/>
            <person name="Haiech J."/>
            <person name="Harwood C.R."/>
            <person name="Henaut A."/>
            <person name="Hilbert H."/>
            <person name="Holsappel S."/>
            <person name="Hosono S."/>
            <person name="Hullo M.-F."/>
            <person name="Itaya M."/>
            <person name="Jones L.-M."/>
            <person name="Joris B."/>
            <person name="Karamata D."/>
            <person name="Kasahara Y."/>
            <person name="Klaerr-Blanchard M."/>
            <person name="Klein C."/>
            <person name="Kobayashi Y."/>
            <person name="Koetter P."/>
            <person name="Koningstein G."/>
            <person name="Krogh S."/>
            <person name="Kumano M."/>
            <person name="Kurita K."/>
            <person name="Lapidus A."/>
            <person name="Lardinois S."/>
            <person name="Lauber J."/>
            <person name="Lazarevic V."/>
            <person name="Lee S.-M."/>
            <person name="Levine A."/>
            <person name="Liu H."/>
            <person name="Masuda S."/>
            <person name="Mauel C."/>
            <person name="Medigue C."/>
            <person name="Medina N."/>
            <person name="Mellado R.P."/>
            <person name="Mizuno M."/>
            <person name="Moestl D."/>
            <person name="Nakai S."/>
            <person name="Noback M."/>
            <person name="Noone D."/>
            <person name="O'Reilly M."/>
            <person name="Ogawa K."/>
            <person name="Ogiwara A."/>
            <person name="Oudega B."/>
            <person name="Park S.-H."/>
            <person name="Parro V."/>
            <person name="Pohl T.M."/>
            <person name="Portetelle D."/>
            <person name="Porwollik S."/>
            <person name="Prescott A.M."/>
            <person name="Presecan E."/>
            <person name="Pujic P."/>
            <person name="Purnelle B."/>
            <person name="Rapoport G."/>
            <person name="Rey M."/>
            <person name="Reynolds S."/>
            <person name="Rieger M."/>
            <person name="Rivolta C."/>
            <person name="Rocha E."/>
            <person name="Roche B."/>
            <person name="Rose M."/>
            <person name="Sadaie Y."/>
            <person name="Sato T."/>
            <person name="Scanlan E."/>
            <person name="Schleich S."/>
            <person name="Schroeter R."/>
            <person name="Scoffone F."/>
            <person name="Sekiguchi J."/>
            <person name="Sekowska A."/>
            <person name="Seror S.J."/>
            <person name="Serror P."/>
            <person name="Shin B.-S."/>
            <person name="Soldo B."/>
            <person name="Sorokin A."/>
            <person name="Tacconi E."/>
            <person name="Takagi T."/>
            <person name="Takahashi H."/>
            <person name="Takemaru K."/>
            <person name="Takeuchi M."/>
            <person name="Tamakoshi A."/>
            <person name="Tanaka T."/>
            <person name="Terpstra P."/>
            <person name="Tognoni A."/>
            <person name="Tosato V."/>
            <person name="Uchiyama S."/>
            <person name="Vandenbol M."/>
            <person name="Vannier F."/>
            <person name="Vassarotti A."/>
            <person name="Viari A."/>
            <person name="Wambutt R."/>
            <person name="Wedler E."/>
            <person name="Wedler H."/>
            <person name="Weitzenegger T."/>
            <person name="Winters P."/>
            <person name="Wipat A."/>
            <person name="Yamamoto H."/>
            <person name="Yamane K."/>
            <person name="Yasumoto K."/>
            <person name="Yata K."/>
            <person name="Yoshida K."/>
            <person name="Yoshikawa H.-F."/>
            <person name="Zumstein E."/>
            <person name="Yoshikawa H."/>
            <person name="Danchin A."/>
        </authorList>
    </citation>
    <scope>NUCLEOTIDE SEQUENCE [LARGE SCALE GENOMIC DNA]</scope>
    <source>
        <strain>168</strain>
    </source>
</reference>
<reference key="2">
    <citation type="journal article" date="2009" name="Microbiology">
        <title>From a consortium sequence to a unified sequence: the Bacillus subtilis 168 reference genome a decade later.</title>
        <authorList>
            <person name="Barbe V."/>
            <person name="Cruveiller S."/>
            <person name="Kunst F."/>
            <person name="Lenoble P."/>
            <person name="Meurice G."/>
            <person name="Sekowska A."/>
            <person name="Vallenet D."/>
            <person name="Wang T."/>
            <person name="Moszer I."/>
            <person name="Medigue C."/>
            <person name="Danchin A."/>
        </authorList>
    </citation>
    <scope>SEQUENCE REVISION TO C-TERMINUS</scope>
</reference>
<proteinExistence type="inferred from homology"/>
<evidence type="ECO:0000305" key="1"/>
<sequence>MFPKPLVILAHEIYGVNSHMKKMGRLIKMAGYDVLTPNLLGEDEVYTLKEEKTAYEQFTKHERLKTGETIIQNVIRQNAGRHIFVIGFSVGATIAWKCSSMPEVSGSVCYYGSRIRDSLHHMPACPVLLFFPNYEPSFDVALLIKKLREKQHTHLEIYQFDALHGFANPDSVYFNRALFFKTLSIIKNGAESRLRTVSSSFF</sequence>
<name>YCZH_BACSU</name>
<protein>
    <recommendedName>
        <fullName>Uncharacterized protein YczH</fullName>
    </recommendedName>
</protein>
<keyword id="KW-0378">Hydrolase</keyword>
<keyword id="KW-1185">Reference proteome</keyword>
<dbReference type="EMBL" id="AL009126">
    <property type="protein sequence ID" value="CAB12210.2"/>
    <property type="molecule type" value="Genomic_DNA"/>
</dbReference>
<dbReference type="PIR" id="F69767">
    <property type="entry name" value="F69767"/>
</dbReference>
<dbReference type="RefSeq" id="NP_388284.2">
    <property type="nucleotide sequence ID" value="NC_000964.3"/>
</dbReference>
<dbReference type="RefSeq" id="WP_003246621.1">
    <property type="nucleotide sequence ID" value="NZ_OZ025638.1"/>
</dbReference>
<dbReference type="SMR" id="O31482"/>
<dbReference type="FunCoup" id="O31482">
    <property type="interactions" value="15"/>
</dbReference>
<dbReference type="STRING" id="224308.BSU04020"/>
<dbReference type="ESTHER" id="bacsu-yczh">
    <property type="family name" value="Dienelactone_hydrolase"/>
</dbReference>
<dbReference type="PaxDb" id="224308-BSU04020"/>
<dbReference type="EnsemblBacteria" id="CAB12210">
    <property type="protein sequence ID" value="CAB12210"/>
    <property type="gene ID" value="BSU_04020"/>
</dbReference>
<dbReference type="GeneID" id="938255"/>
<dbReference type="KEGG" id="bsu:BSU04020"/>
<dbReference type="PATRIC" id="fig|224308.179.peg.427"/>
<dbReference type="eggNOG" id="COG0412">
    <property type="taxonomic scope" value="Bacteria"/>
</dbReference>
<dbReference type="InParanoid" id="O31482"/>
<dbReference type="OrthoDB" id="115291at2"/>
<dbReference type="PhylomeDB" id="O31482"/>
<dbReference type="BioCyc" id="BSUB:BSU04020-MONOMER"/>
<dbReference type="Proteomes" id="UP000001570">
    <property type="component" value="Chromosome"/>
</dbReference>
<dbReference type="GO" id="GO:0016787">
    <property type="term" value="F:hydrolase activity"/>
    <property type="evidence" value="ECO:0007669"/>
    <property type="project" value="UniProtKB-KW"/>
</dbReference>
<dbReference type="Gene3D" id="3.40.50.1820">
    <property type="entry name" value="alpha/beta hydrolase"/>
    <property type="match status" value="1"/>
</dbReference>
<dbReference type="InterPro" id="IPR029058">
    <property type="entry name" value="AB_hydrolase_fold"/>
</dbReference>
<dbReference type="InterPro" id="IPR002925">
    <property type="entry name" value="Dienelactn_hydro"/>
</dbReference>
<dbReference type="InterPro" id="IPR051049">
    <property type="entry name" value="Dienelactone_hydrolase-like"/>
</dbReference>
<dbReference type="PANTHER" id="PTHR46623:SF6">
    <property type="entry name" value="ALPHA_BETA-HYDROLASES SUPERFAMILY PROTEIN"/>
    <property type="match status" value="1"/>
</dbReference>
<dbReference type="PANTHER" id="PTHR46623">
    <property type="entry name" value="CARBOXYMETHYLENEBUTENOLIDASE-RELATED"/>
    <property type="match status" value="1"/>
</dbReference>
<dbReference type="Pfam" id="PF01738">
    <property type="entry name" value="DLH"/>
    <property type="match status" value="1"/>
</dbReference>
<dbReference type="SUPFAM" id="SSF53474">
    <property type="entry name" value="alpha/beta-Hydrolases"/>
    <property type="match status" value="1"/>
</dbReference>
<feature type="chain" id="PRO_0000161586" description="Uncharacterized protein YczH">
    <location>
        <begin position="1"/>
        <end position="202"/>
    </location>
</feature>
<comment type="similarity">
    <text evidence="1">Belongs to the dienelactone hydrolase family.</text>
</comment>
<organism>
    <name type="scientific">Bacillus subtilis (strain 168)</name>
    <dbReference type="NCBI Taxonomy" id="224308"/>
    <lineage>
        <taxon>Bacteria</taxon>
        <taxon>Bacillati</taxon>
        <taxon>Bacillota</taxon>
        <taxon>Bacilli</taxon>
        <taxon>Bacillales</taxon>
        <taxon>Bacillaceae</taxon>
        <taxon>Bacillus</taxon>
    </lineage>
</organism>
<accession>O31482</accession>